<name>CH3L2_HUMAN</name>
<feature type="signal peptide">
    <location>
        <begin position="1"/>
        <end position="26"/>
    </location>
</feature>
<feature type="chain" id="PRO_0000011969" description="Chitinase-3-like protein 2">
    <location>
        <begin position="27"/>
        <end position="390"/>
    </location>
</feature>
<feature type="domain" description="GH18" evidence="2">
    <location>
        <begin position="27"/>
        <end position="390"/>
    </location>
</feature>
<feature type="binding site" evidence="2">
    <location>
        <begin position="75"/>
        <end position="76"/>
    </location>
    <ligand>
        <name>chitin</name>
        <dbReference type="ChEBI" id="CHEBI:17029"/>
    </ligand>
</feature>
<feature type="binding site" evidence="2">
    <location>
        <begin position="102"/>
        <end position="105"/>
    </location>
    <ligand>
        <name>chitin</name>
        <dbReference type="ChEBI" id="CHEBI:17029"/>
    </ligand>
</feature>
<feature type="binding site" evidence="4">
    <location>
        <position position="104"/>
    </location>
    <ligand>
        <name>chitin</name>
        <dbReference type="ChEBI" id="CHEBI:17029"/>
    </ligand>
</feature>
<feature type="binding site" evidence="2 4">
    <location>
        <position position="146"/>
    </location>
    <ligand>
        <name>chitin</name>
        <dbReference type="ChEBI" id="CHEBI:17029"/>
    </ligand>
</feature>
<feature type="binding site" evidence="2">
    <location>
        <begin position="210"/>
        <end position="213"/>
    </location>
    <ligand>
        <name>chitin</name>
        <dbReference type="ChEBI" id="CHEBI:17029"/>
    </ligand>
</feature>
<feature type="binding site" evidence="4">
    <location>
        <position position="213"/>
    </location>
    <ligand>
        <name>chitin</name>
        <dbReference type="ChEBI" id="CHEBI:17029"/>
    </ligand>
</feature>
<feature type="binding site" evidence="2 4">
    <location>
        <position position="360"/>
    </location>
    <ligand>
        <name>chitin</name>
        <dbReference type="ChEBI" id="CHEBI:17029"/>
    </ligand>
</feature>
<feature type="glycosylation site" description="N-linked (GlcNAc...) asparagine" evidence="1">
    <location>
        <position position="35"/>
    </location>
</feature>
<feature type="disulfide bond" evidence="2">
    <location>
        <begin position="31"/>
        <end position="56"/>
    </location>
</feature>
<feature type="splice variant" id="VSP_044262" description="In isoform 2." evidence="7 8">
    <location>
        <begin position="1"/>
        <end position="79"/>
    </location>
</feature>
<feature type="splice variant" id="VSP_047245" description="In isoform 3." evidence="9">
    <location>
        <begin position="14"/>
        <end position="23"/>
    </location>
</feature>
<feature type="sequence variant" id="VAR_049198" description="In dbSNP:rs11556868." evidence="3 6">
    <original>A</original>
    <variation>V</variation>
    <location>
        <position position="182"/>
    </location>
</feature>
<feature type="sequence variant" id="VAR_033731" description="In dbSNP:rs34049547.">
    <original>V</original>
    <variation>I</variation>
    <location>
        <position position="184"/>
    </location>
</feature>
<feature type="sequence variant" id="VAR_061189" description="In dbSNP:rs13721.">
    <original>R</original>
    <variation>W</variation>
    <location>
        <position position="318"/>
    </location>
</feature>
<feature type="mutagenesis site" description="Confers chitinase activity; when associated with E-145." evidence="4">
    <original>S</original>
    <variation>D</variation>
    <location>
        <position position="143"/>
    </location>
</feature>
<feature type="mutagenesis site" description="Confers chitinase activity; when associated with D-143." evidence="4">
    <original>I</original>
    <variation>E</variation>
    <location>
        <position position="145"/>
    </location>
</feature>
<feature type="strand" evidence="10">
    <location>
        <begin position="28"/>
        <end position="36"/>
    </location>
</feature>
<feature type="helix" evidence="10">
    <location>
        <begin position="37"/>
        <end position="39"/>
    </location>
</feature>
<feature type="helix" evidence="10">
    <location>
        <begin position="48"/>
        <end position="50"/>
    </location>
</feature>
<feature type="turn" evidence="10">
    <location>
        <begin position="53"/>
        <end position="55"/>
    </location>
</feature>
<feature type="strand" evidence="10">
    <location>
        <begin position="57"/>
        <end position="67"/>
    </location>
</feature>
<feature type="strand" evidence="10">
    <location>
        <begin position="70"/>
        <end position="72"/>
    </location>
</feature>
<feature type="helix" evidence="10">
    <location>
        <begin position="78"/>
        <end position="91"/>
    </location>
</feature>
<feature type="strand" evidence="10">
    <location>
        <begin position="96"/>
        <end position="103"/>
    </location>
</feature>
<feature type="turn" evidence="10">
    <location>
        <begin position="104"/>
        <end position="108"/>
    </location>
</feature>
<feature type="helix" evidence="10">
    <location>
        <begin position="109"/>
        <end position="111"/>
    </location>
</feature>
<feature type="helix" evidence="10">
    <location>
        <begin position="114"/>
        <end position="116"/>
    </location>
</feature>
<feature type="helix" evidence="10">
    <location>
        <begin position="118"/>
        <end position="134"/>
    </location>
</feature>
<feature type="strand" evidence="10">
    <location>
        <begin position="139"/>
        <end position="145"/>
    </location>
</feature>
<feature type="helix" evidence="10">
    <location>
        <begin position="148"/>
        <end position="171"/>
    </location>
</feature>
<feature type="strand" evidence="10">
    <location>
        <begin position="179"/>
        <end position="185"/>
    </location>
</feature>
<feature type="helix" evidence="10">
    <location>
        <begin position="188"/>
        <end position="194"/>
    </location>
</feature>
<feature type="helix" evidence="10">
    <location>
        <begin position="197"/>
        <end position="203"/>
    </location>
</feature>
<feature type="strand" evidence="10">
    <location>
        <begin position="205"/>
        <end position="210"/>
    </location>
</feature>
<feature type="helix" evidence="10">
    <location>
        <begin position="238"/>
        <end position="242"/>
    </location>
</feature>
<feature type="helix" evidence="10">
    <location>
        <begin position="245"/>
        <end position="254"/>
    </location>
</feature>
<feature type="helix" evidence="10">
    <location>
        <begin position="259"/>
        <end position="261"/>
    </location>
</feature>
<feature type="strand" evidence="10">
    <location>
        <begin position="262"/>
        <end position="278"/>
    </location>
</feature>
<feature type="strand" evidence="10">
    <location>
        <begin position="285"/>
        <end position="289"/>
    </location>
</feature>
<feature type="turn" evidence="10">
    <location>
        <begin position="294"/>
        <end position="296"/>
    </location>
</feature>
<feature type="strand" evidence="10">
    <location>
        <begin position="301"/>
        <end position="303"/>
    </location>
</feature>
<feature type="helix" evidence="10">
    <location>
        <begin position="304"/>
        <end position="310"/>
    </location>
</feature>
<feature type="turn" evidence="10">
    <location>
        <begin position="311"/>
        <end position="313"/>
    </location>
</feature>
<feature type="strand" evidence="10">
    <location>
        <begin position="315"/>
        <end position="319"/>
    </location>
</feature>
<feature type="turn" evidence="10">
    <location>
        <begin position="320"/>
        <end position="323"/>
    </location>
</feature>
<feature type="strand" evidence="10">
    <location>
        <begin position="324"/>
        <end position="329"/>
    </location>
</feature>
<feature type="strand" evidence="10">
    <location>
        <begin position="332"/>
        <end position="335"/>
    </location>
</feature>
<feature type="helix" evidence="10">
    <location>
        <begin position="339"/>
        <end position="351"/>
    </location>
</feature>
<feature type="strand" evidence="10">
    <location>
        <begin position="355"/>
        <end position="360"/>
    </location>
</feature>
<feature type="helix" evidence="10">
    <location>
        <begin position="362"/>
        <end position="364"/>
    </location>
</feature>
<feature type="turn" evidence="10">
    <location>
        <begin position="370"/>
        <end position="372"/>
    </location>
</feature>
<feature type="helix" evidence="10">
    <location>
        <begin position="378"/>
        <end position="388"/>
    </location>
</feature>
<comment type="function">
    <text evidence="4">Lectin that binds chitooligosaccharides and other glycans with high affinity, but not heparin. Has no chitinase activity.</text>
</comment>
<comment type="subcellular location">
    <subcellularLocation>
        <location evidence="9">Secreted</location>
    </subcellularLocation>
</comment>
<comment type="alternative products">
    <event type="alternative splicing"/>
    <isoform>
        <id>Q15782-4</id>
        <name>1</name>
        <sequence type="displayed"/>
    </isoform>
    <isoform>
        <id>Q15782-5</id>
        <name>2</name>
        <sequence type="described" ref="VSP_044262"/>
    </isoform>
    <isoform>
        <id>Q15782-6</id>
        <name>3</name>
        <sequence type="described" ref="VSP_047245"/>
    </isoform>
</comment>
<comment type="tissue specificity">
    <text evidence="5">Highest expression in chondrocytes, followed by synoviocytes, lung and heart. Not detected in spleen, pancreas, and liver. May also be expressed in developing brain and placenta.</text>
</comment>
<comment type="similarity">
    <text evidence="9">Belongs to the glycosyl hydrolase 18 family.</text>
</comment>
<comment type="caution">
    <text evidence="9">Lacks the conserved sequence motif DxxDxDxE that is essential for the catalytic activity of chitinases of the glycosyl hydrolase 18 family, and therefore has no chitinase activity.</text>
</comment>
<comment type="sequence caution" evidence="9">
    <conflict type="erroneous initiation">
        <sequence resource="EMBL-CDS" id="AAB04534"/>
    </conflict>
    <text>Extended N-terminus.</text>
</comment>
<comment type="sequence caution" evidence="9">
    <conflict type="erroneous initiation">
        <sequence resource="EMBL-CDS" id="AAC50597"/>
    </conflict>
    <text>Truncated N-terminus.</text>
</comment>
<keyword id="KW-0002">3D-structure</keyword>
<keyword id="KW-0025">Alternative splicing</keyword>
<keyword id="KW-0147">Chitin-binding</keyword>
<keyword id="KW-0903">Direct protein sequencing</keyword>
<keyword id="KW-1015">Disulfide bond</keyword>
<keyword id="KW-0325">Glycoprotein</keyword>
<keyword id="KW-0378">Hydrolase</keyword>
<keyword id="KW-0430">Lectin</keyword>
<keyword id="KW-1267">Proteomics identification</keyword>
<keyword id="KW-1185">Reference proteome</keyword>
<keyword id="KW-0964">Secreted</keyword>
<keyword id="KW-0732">Signal</keyword>
<proteinExistence type="evidence at protein level"/>
<reference key="1">
    <citation type="submission" date="1996-05" db="EMBL/GenBank/DDBJ databases">
        <title>Cloning of a novel lymphoid restricted human chitinase and localization to 1p13.3.</title>
        <authorList>
            <person name="Grossman A."/>
            <person name="Matsuyama T."/>
            <person name="Baker E."/>
            <person name="Waterhouse P."/>
            <person name="Sutherland G.R."/>
            <person name="Mak T.W."/>
        </authorList>
    </citation>
    <scope>NUCLEOTIDE SEQUENCE [MRNA] (ISOFORM 2)</scope>
</reference>
<reference key="2">
    <citation type="journal article" date="1996" name="J. Biol. Chem.">
        <title>Isolation and sequence of a novel human chondrocyte protein related to mammalian members of the chitinase protein family.</title>
        <authorList>
            <person name="Hu B."/>
            <person name="Trinh K."/>
            <person name="Figueira W.F."/>
            <person name="Price P.A."/>
        </authorList>
    </citation>
    <scope>NUCLEOTIDE SEQUENCE [MRNA] (ISOFORM 1)</scope>
    <scope>PROTEIN SEQUENCE OF 39-51</scope>
    <scope>TISSUE SPECIFICITY</scope>
    <source>
        <tissue>Articular cartilage</tissue>
    </source>
</reference>
<reference key="3">
    <citation type="submission" date="2003-05" db="EMBL/GenBank/DDBJ databases">
        <title>Cloning of human full-length CDSs in BD Creator(TM) system donor vector.</title>
        <authorList>
            <person name="Kalnine N."/>
            <person name="Chen X."/>
            <person name="Rolfs A."/>
            <person name="Halleck A."/>
            <person name="Hines L."/>
            <person name="Eisenstein S."/>
            <person name="Koundinya M."/>
            <person name="Raphael J."/>
            <person name="Moreira D."/>
            <person name="Kelley T."/>
            <person name="LaBaer J."/>
            <person name="Lin Y."/>
            <person name="Phelan M."/>
            <person name="Farmer A."/>
        </authorList>
    </citation>
    <scope>NUCLEOTIDE SEQUENCE [LARGE SCALE MRNA] (ISOFORM 1)</scope>
    <scope>VARIANT VAL-182</scope>
</reference>
<reference key="4">
    <citation type="journal article" date="2004" name="Nat. Genet.">
        <title>Complete sequencing and characterization of 21,243 full-length human cDNAs.</title>
        <authorList>
            <person name="Ota T."/>
            <person name="Suzuki Y."/>
            <person name="Nishikawa T."/>
            <person name="Otsuki T."/>
            <person name="Sugiyama T."/>
            <person name="Irie R."/>
            <person name="Wakamatsu A."/>
            <person name="Hayashi K."/>
            <person name="Sato H."/>
            <person name="Nagai K."/>
            <person name="Kimura K."/>
            <person name="Makita H."/>
            <person name="Sekine M."/>
            <person name="Obayashi M."/>
            <person name="Nishi T."/>
            <person name="Shibahara T."/>
            <person name="Tanaka T."/>
            <person name="Ishii S."/>
            <person name="Yamamoto J."/>
            <person name="Saito K."/>
            <person name="Kawai Y."/>
            <person name="Isono Y."/>
            <person name="Nakamura Y."/>
            <person name="Nagahari K."/>
            <person name="Murakami K."/>
            <person name="Yasuda T."/>
            <person name="Iwayanagi T."/>
            <person name="Wagatsuma M."/>
            <person name="Shiratori A."/>
            <person name="Sudo H."/>
            <person name="Hosoiri T."/>
            <person name="Kaku Y."/>
            <person name="Kodaira H."/>
            <person name="Kondo H."/>
            <person name="Sugawara M."/>
            <person name="Takahashi M."/>
            <person name="Kanda K."/>
            <person name="Yokoi T."/>
            <person name="Furuya T."/>
            <person name="Kikkawa E."/>
            <person name="Omura Y."/>
            <person name="Abe K."/>
            <person name="Kamihara K."/>
            <person name="Katsuta N."/>
            <person name="Sato K."/>
            <person name="Tanikawa M."/>
            <person name="Yamazaki M."/>
            <person name="Ninomiya K."/>
            <person name="Ishibashi T."/>
            <person name="Yamashita H."/>
            <person name="Murakawa K."/>
            <person name="Fujimori K."/>
            <person name="Tanai H."/>
            <person name="Kimata M."/>
            <person name="Watanabe M."/>
            <person name="Hiraoka S."/>
            <person name="Chiba Y."/>
            <person name="Ishida S."/>
            <person name="Ono Y."/>
            <person name="Takiguchi S."/>
            <person name="Watanabe S."/>
            <person name="Yosida M."/>
            <person name="Hotuta T."/>
            <person name="Kusano J."/>
            <person name="Kanehori K."/>
            <person name="Takahashi-Fujii A."/>
            <person name="Hara H."/>
            <person name="Tanase T.-O."/>
            <person name="Nomura Y."/>
            <person name="Togiya S."/>
            <person name="Komai F."/>
            <person name="Hara R."/>
            <person name="Takeuchi K."/>
            <person name="Arita M."/>
            <person name="Imose N."/>
            <person name="Musashino K."/>
            <person name="Yuuki H."/>
            <person name="Oshima A."/>
            <person name="Sasaki N."/>
            <person name="Aotsuka S."/>
            <person name="Yoshikawa Y."/>
            <person name="Matsunawa H."/>
            <person name="Ichihara T."/>
            <person name="Shiohata N."/>
            <person name="Sano S."/>
            <person name="Moriya S."/>
            <person name="Momiyama H."/>
            <person name="Satoh N."/>
            <person name="Takami S."/>
            <person name="Terashima Y."/>
            <person name="Suzuki O."/>
            <person name="Nakagawa S."/>
            <person name="Senoh A."/>
            <person name="Mizoguchi H."/>
            <person name="Goto Y."/>
            <person name="Shimizu F."/>
            <person name="Wakebe H."/>
            <person name="Hishigaki H."/>
            <person name="Watanabe T."/>
            <person name="Sugiyama A."/>
            <person name="Takemoto M."/>
            <person name="Kawakami B."/>
            <person name="Yamazaki M."/>
            <person name="Watanabe K."/>
            <person name="Kumagai A."/>
            <person name="Itakura S."/>
            <person name="Fukuzumi Y."/>
            <person name="Fujimori Y."/>
            <person name="Komiyama M."/>
            <person name="Tashiro H."/>
            <person name="Tanigami A."/>
            <person name="Fujiwara T."/>
            <person name="Ono T."/>
            <person name="Yamada K."/>
            <person name="Fujii Y."/>
            <person name="Ozaki K."/>
            <person name="Hirao M."/>
            <person name="Ohmori Y."/>
            <person name="Kawabata A."/>
            <person name="Hikiji T."/>
            <person name="Kobatake N."/>
            <person name="Inagaki H."/>
            <person name="Ikema Y."/>
            <person name="Okamoto S."/>
            <person name="Okitani R."/>
            <person name="Kawakami T."/>
            <person name="Noguchi S."/>
            <person name="Itoh T."/>
            <person name="Shigeta K."/>
            <person name="Senba T."/>
            <person name="Matsumura K."/>
            <person name="Nakajima Y."/>
            <person name="Mizuno T."/>
            <person name="Morinaga M."/>
            <person name="Sasaki M."/>
            <person name="Togashi T."/>
            <person name="Oyama M."/>
            <person name="Hata H."/>
            <person name="Watanabe M."/>
            <person name="Komatsu T."/>
            <person name="Mizushima-Sugano J."/>
            <person name="Satoh T."/>
            <person name="Shirai Y."/>
            <person name="Takahashi Y."/>
            <person name="Nakagawa K."/>
            <person name="Okumura K."/>
            <person name="Nagase T."/>
            <person name="Nomura N."/>
            <person name="Kikuchi H."/>
            <person name="Masuho Y."/>
            <person name="Yamashita R."/>
            <person name="Nakai K."/>
            <person name="Yada T."/>
            <person name="Nakamura Y."/>
            <person name="Ohara O."/>
            <person name="Isogai T."/>
            <person name="Sugano S."/>
        </authorList>
    </citation>
    <scope>NUCLEOTIDE SEQUENCE [LARGE SCALE MRNA] (ISOFORM 2)</scope>
</reference>
<reference key="5">
    <citation type="journal article" date="2006" name="Nature">
        <title>The DNA sequence and biological annotation of human chromosome 1.</title>
        <authorList>
            <person name="Gregory S.G."/>
            <person name="Barlow K.F."/>
            <person name="McLay K.E."/>
            <person name="Kaul R."/>
            <person name="Swarbreck D."/>
            <person name="Dunham A."/>
            <person name="Scott C.E."/>
            <person name="Howe K.L."/>
            <person name="Woodfine K."/>
            <person name="Spencer C.C.A."/>
            <person name="Jones M.C."/>
            <person name="Gillson C."/>
            <person name="Searle S."/>
            <person name="Zhou Y."/>
            <person name="Kokocinski F."/>
            <person name="McDonald L."/>
            <person name="Evans R."/>
            <person name="Phillips K."/>
            <person name="Atkinson A."/>
            <person name="Cooper R."/>
            <person name="Jones C."/>
            <person name="Hall R.E."/>
            <person name="Andrews T.D."/>
            <person name="Lloyd C."/>
            <person name="Ainscough R."/>
            <person name="Almeida J.P."/>
            <person name="Ambrose K.D."/>
            <person name="Anderson F."/>
            <person name="Andrew R.W."/>
            <person name="Ashwell R.I.S."/>
            <person name="Aubin K."/>
            <person name="Babbage A.K."/>
            <person name="Bagguley C.L."/>
            <person name="Bailey J."/>
            <person name="Beasley H."/>
            <person name="Bethel G."/>
            <person name="Bird C.P."/>
            <person name="Bray-Allen S."/>
            <person name="Brown J.Y."/>
            <person name="Brown A.J."/>
            <person name="Buckley D."/>
            <person name="Burton J."/>
            <person name="Bye J."/>
            <person name="Carder C."/>
            <person name="Chapman J.C."/>
            <person name="Clark S.Y."/>
            <person name="Clarke G."/>
            <person name="Clee C."/>
            <person name="Cobley V."/>
            <person name="Collier R.E."/>
            <person name="Corby N."/>
            <person name="Coville G.J."/>
            <person name="Davies J."/>
            <person name="Deadman R."/>
            <person name="Dunn M."/>
            <person name="Earthrowl M."/>
            <person name="Ellington A.G."/>
            <person name="Errington H."/>
            <person name="Frankish A."/>
            <person name="Frankland J."/>
            <person name="French L."/>
            <person name="Garner P."/>
            <person name="Garnett J."/>
            <person name="Gay L."/>
            <person name="Ghori M.R.J."/>
            <person name="Gibson R."/>
            <person name="Gilby L.M."/>
            <person name="Gillett W."/>
            <person name="Glithero R.J."/>
            <person name="Grafham D.V."/>
            <person name="Griffiths C."/>
            <person name="Griffiths-Jones S."/>
            <person name="Grocock R."/>
            <person name="Hammond S."/>
            <person name="Harrison E.S.I."/>
            <person name="Hart E."/>
            <person name="Haugen E."/>
            <person name="Heath P.D."/>
            <person name="Holmes S."/>
            <person name="Holt K."/>
            <person name="Howden P.J."/>
            <person name="Hunt A.R."/>
            <person name="Hunt S.E."/>
            <person name="Hunter G."/>
            <person name="Isherwood J."/>
            <person name="James R."/>
            <person name="Johnson C."/>
            <person name="Johnson D."/>
            <person name="Joy A."/>
            <person name="Kay M."/>
            <person name="Kershaw J.K."/>
            <person name="Kibukawa M."/>
            <person name="Kimberley A.M."/>
            <person name="King A."/>
            <person name="Knights A.J."/>
            <person name="Lad H."/>
            <person name="Laird G."/>
            <person name="Lawlor S."/>
            <person name="Leongamornlert D.A."/>
            <person name="Lloyd D.M."/>
            <person name="Loveland J."/>
            <person name="Lovell J."/>
            <person name="Lush M.J."/>
            <person name="Lyne R."/>
            <person name="Martin S."/>
            <person name="Mashreghi-Mohammadi M."/>
            <person name="Matthews L."/>
            <person name="Matthews N.S.W."/>
            <person name="McLaren S."/>
            <person name="Milne S."/>
            <person name="Mistry S."/>
            <person name="Moore M.J.F."/>
            <person name="Nickerson T."/>
            <person name="O'Dell C.N."/>
            <person name="Oliver K."/>
            <person name="Palmeiri A."/>
            <person name="Palmer S.A."/>
            <person name="Parker A."/>
            <person name="Patel D."/>
            <person name="Pearce A.V."/>
            <person name="Peck A.I."/>
            <person name="Pelan S."/>
            <person name="Phelps K."/>
            <person name="Phillimore B.J."/>
            <person name="Plumb R."/>
            <person name="Rajan J."/>
            <person name="Raymond C."/>
            <person name="Rouse G."/>
            <person name="Saenphimmachak C."/>
            <person name="Sehra H.K."/>
            <person name="Sheridan E."/>
            <person name="Shownkeen R."/>
            <person name="Sims S."/>
            <person name="Skuce C.D."/>
            <person name="Smith M."/>
            <person name="Steward C."/>
            <person name="Subramanian S."/>
            <person name="Sycamore N."/>
            <person name="Tracey A."/>
            <person name="Tromans A."/>
            <person name="Van Helmond Z."/>
            <person name="Wall M."/>
            <person name="Wallis J.M."/>
            <person name="White S."/>
            <person name="Whitehead S.L."/>
            <person name="Wilkinson J.E."/>
            <person name="Willey D.L."/>
            <person name="Williams H."/>
            <person name="Wilming L."/>
            <person name="Wray P.W."/>
            <person name="Wu Z."/>
            <person name="Coulson A."/>
            <person name="Vaudin M."/>
            <person name="Sulston J.E."/>
            <person name="Durbin R.M."/>
            <person name="Hubbard T."/>
            <person name="Wooster R."/>
            <person name="Dunham I."/>
            <person name="Carter N.P."/>
            <person name="McVean G."/>
            <person name="Ross M.T."/>
            <person name="Harrow J."/>
            <person name="Olson M.V."/>
            <person name="Beck S."/>
            <person name="Rogers J."/>
            <person name="Bentley D.R."/>
        </authorList>
    </citation>
    <scope>NUCLEOTIDE SEQUENCE [LARGE SCALE GENOMIC DNA]</scope>
</reference>
<reference key="6">
    <citation type="submission" date="2005-07" db="EMBL/GenBank/DDBJ databases">
        <authorList>
            <person name="Mural R.J."/>
            <person name="Istrail S."/>
            <person name="Sutton G."/>
            <person name="Florea L."/>
            <person name="Halpern A.L."/>
            <person name="Mobarry C.M."/>
            <person name="Lippert R."/>
            <person name="Walenz B."/>
            <person name="Shatkay H."/>
            <person name="Dew I."/>
            <person name="Miller J.R."/>
            <person name="Flanigan M.J."/>
            <person name="Edwards N.J."/>
            <person name="Bolanos R."/>
            <person name="Fasulo D."/>
            <person name="Halldorsson B.V."/>
            <person name="Hannenhalli S."/>
            <person name="Turner R."/>
            <person name="Yooseph S."/>
            <person name="Lu F."/>
            <person name="Nusskern D.R."/>
            <person name="Shue B.C."/>
            <person name="Zheng X.H."/>
            <person name="Zhong F."/>
            <person name="Delcher A.L."/>
            <person name="Huson D.H."/>
            <person name="Kravitz S.A."/>
            <person name="Mouchard L."/>
            <person name="Reinert K."/>
            <person name="Remington K.A."/>
            <person name="Clark A.G."/>
            <person name="Waterman M.S."/>
            <person name="Eichler E.E."/>
            <person name="Adams M.D."/>
            <person name="Hunkapiller M.W."/>
            <person name="Myers E.W."/>
            <person name="Venter J.C."/>
        </authorList>
    </citation>
    <scope>NUCLEOTIDE SEQUENCE [LARGE SCALE GENOMIC DNA]</scope>
</reference>
<reference key="7">
    <citation type="journal article" date="2004" name="Genome Res.">
        <title>The status, quality, and expansion of the NIH full-length cDNA project: the Mammalian Gene Collection (MGC).</title>
        <authorList>
            <consortium name="The MGC Project Team"/>
        </authorList>
    </citation>
    <scope>NUCLEOTIDE SEQUENCE [LARGE SCALE MRNA] (ISOFORM 1)</scope>
    <scope>VARIANT VAL-182</scope>
    <source>
        <tissue>Brain</tissue>
    </source>
</reference>
<reference key="8">
    <citation type="journal article" date="2012" name="Biochem. J.">
        <title>Human YKL-39 is a pseudo-chitinase with retained chitooligosaccharide-binding properties.</title>
        <authorList>
            <person name="Schimpl M."/>
            <person name="Rush C.L."/>
            <person name="Betou M."/>
            <person name="Eggleston I.M."/>
            <person name="Recklies A.D."/>
            <person name="van Aalten D.M."/>
        </authorList>
    </citation>
    <scope>X-RAY CRYSTALLOGRAPHY (1.95 ANGSTROMS) OF 26-390 IN COMPLEX WITH CHITOOLIGOSACCHARIDE</scope>
    <scope>FUNCTION</scope>
    <scope>ABSENCE OF CHITINASE ACTIVITY</scope>
    <scope>MUTAGENESIS OF SER-143 AND ILE-145</scope>
</reference>
<sequence length="390" mass="43501">MGATTMDQKSLWAGVVVLLLLQGGSAYKLVCYFTNWSQDRQEPGKFTPENIDPFLCSHLIYSFASIENNKVIIKDKSEVMLYQTINSLKTKNPKLKILLSIGGYLFGSKGFHPMVDSSTSRLEFINSIILFLRNHNFDGLDVSWIYPDQKENTHFTVLIHELAEAFQKDFTKSTKERLLLTAGVSAGRQMIDNSYQVEKLAKDLDFINLLSFDFHGSWEKPLITGHNSPLSKGWQDRGPSSYYNVEYAVGYWIHKGMPSEKVVMGIPTYGHSFTLASAETTVGAPASGPGAAGPITESSGFLAYYEICQFLKGAKITRLQDQQVPYAVKGNQWVGYDDVKSMETKVQFLKNLNLGGAMIWSIDMDDFTGKSCNQGPYPLVQAVKRSLGSL</sequence>
<accession>Q15782</accession>
<accession>A6NNY3</accession>
<accession>B4DPR7</accession>
<accession>Q15749</accession>
<accession>Q15783</accession>
<accession>Q5VUV7</accession>
<accession>Q96F97</accession>
<protein>
    <recommendedName>
        <fullName>Chitinase-3-like protein 2</fullName>
    </recommendedName>
    <alternativeName>
        <fullName>Chondrocyte protein 39</fullName>
    </alternativeName>
    <alternativeName>
        <fullName>YKL-39</fullName>
    </alternativeName>
</protein>
<organism>
    <name type="scientific">Homo sapiens</name>
    <name type="common">Human</name>
    <dbReference type="NCBI Taxonomy" id="9606"/>
    <lineage>
        <taxon>Eukaryota</taxon>
        <taxon>Metazoa</taxon>
        <taxon>Chordata</taxon>
        <taxon>Craniata</taxon>
        <taxon>Vertebrata</taxon>
        <taxon>Euteleostomi</taxon>
        <taxon>Mammalia</taxon>
        <taxon>Eutheria</taxon>
        <taxon>Euarchontoglires</taxon>
        <taxon>Primates</taxon>
        <taxon>Haplorrhini</taxon>
        <taxon>Catarrhini</taxon>
        <taxon>Hominidae</taxon>
        <taxon>Homo</taxon>
    </lineage>
</organism>
<evidence type="ECO:0000255" key="1"/>
<evidence type="ECO:0000255" key="2">
    <source>
        <dbReference type="PROSITE-ProRule" id="PRU01258"/>
    </source>
</evidence>
<evidence type="ECO:0000269" key="3">
    <source>
    </source>
</evidence>
<evidence type="ECO:0000269" key="4">
    <source>
    </source>
</evidence>
<evidence type="ECO:0000269" key="5">
    <source>
    </source>
</evidence>
<evidence type="ECO:0000269" key="6">
    <source ref="3"/>
</evidence>
<evidence type="ECO:0000303" key="7">
    <source>
    </source>
</evidence>
<evidence type="ECO:0000303" key="8">
    <source ref="1"/>
</evidence>
<evidence type="ECO:0000305" key="9"/>
<evidence type="ECO:0007829" key="10">
    <source>
        <dbReference type="PDB" id="4P8V"/>
    </source>
</evidence>
<gene>
    <name type="primary">CHI3L2</name>
</gene>
<dbReference type="EMBL" id="U58515">
    <property type="protein sequence ID" value="AAB04534.1"/>
    <property type="status" value="ALT_INIT"/>
    <property type="molecule type" value="mRNA"/>
</dbReference>
<dbReference type="EMBL" id="U58514">
    <property type="protein sequence ID" value="AAB04533.1"/>
    <property type="molecule type" value="mRNA"/>
</dbReference>
<dbReference type="EMBL" id="U49835">
    <property type="protein sequence ID" value="AAC50597.1"/>
    <property type="status" value="ALT_INIT"/>
    <property type="molecule type" value="mRNA"/>
</dbReference>
<dbReference type="EMBL" id="BT006767">
    <property type="protein sequence ID" value="AAP35413.1"/>
    <property type="molecule type" value="mRNA"/>
</dbReference>
<dbReference type="EMBL" id="AK298466">
    <property type="protein sequence ID" value="BAG60679.1"/>
    <property type="molecule type" value="mRNA"/>
</dbReference>
<dbReference type="EMBL" id="AL355816">
    <property type="status" value="NOT_ANNOTATED_CDS"/>
    <property type="molecule type" value="Genomic_DNA"/>
</dbReference>
<dbReference type="EMBL" id="AL513202">
    <property type="status" value="NOT_ANNOTATED_CDS"/>
    <property type="molecule type" value="Genomic_DNA"/>
</dbReference>
<dbReference type="EMBL" id="CH471122">
    <property type="protein sequence ID" value="EAW56481.1"/>
    <property type="molecule type" value="Genomic_DNA"/>
</dbReference>
<dbReference type="EMBL" id="BC011460">
    <property type="protein sequence ID" value="AAH11460.1"/>
    <property type="molecule type" value="mRNA"/>
</dbReference>
<dbReference type="CCDS" id="CCDS30802.1">
    <molecule id="Q15782-4"/>
</dbReference>
<dbReference type="CCDS" id="CCDS30803.1">
    <molecule id="Q15782-6"/>
</dbReference>
<dbReference type="CCDS" id="CCDS41367.1">
    <molecule id="Q15782-5"/>
</dbReference>
<dbReference type="RefSeq" id="NP_001020368.1">
    <molecule id="Q15782-6"/>
    <property type="nucleotide sequence ID" value="NM_001025197.1"/>
</dbReference>
<dbReference type="RefSeq" id="NP_001020370.1">
    <molecule id="Q15782-5"/>
    <property type="nucleotide sequence ID" value="NM_001025199.2"/>
</dbReference>
<dbReference type="RefSeq" id="NP_003991.2">
    <molecule id="Q15782-4"/>
    <property type="nucleotide sequence ID" value="NM_004000.3"/>
</dbReference>
<dbReference type="RefSeq" id="XP_054189970.1">
    <molecule id="Q15782-4"/>
    <property type="nucleotide sequence ID" value="XM_054333995.1"/>
</dbReference>
<dbReference type="RefSeq" id="XP_054189971.1">
    <molecule id="Q15782-4"/>
    <property type="nucleotide sequence ID" value="XM_054333996.1"/>
</dbReference>
<dbReference type="RefSeq" id="XP_054189972.1">
    <molecule id="Q15782-4"/>
    <property type="nucleotide sequence ID" value="XM_054333997.1"/>
</dbReference>
<dbReference type="RefSeq" id="XP_054189973.1">
    <molecule id="Q15782-4"/>
    <property type="nucleotide sequence ID" value="XM_054333998.1"/>
</dbReference>
<dbReference type="RefSeq" id="XP_054189974.1">
    <molecule id="Q15782-6"/>
    <property type="nucleotide sequence ID" value="XM_054333999.1"/>
</dbReference>
<dbReference type="RefSeq" id="XP_054189975.1">
    <molecule id="Q15782-6"/>
    <property type="nucleotide sequence ID" value="XM_054334000.1"/>
</dbReference>
<dbReference type="PDB" id="4AY1">
    <property type="method" value="X-ray"/>
    <property type="resolution" value="1.95 A"/>
    <property type="chains" value="A/B/C/D/E/F/G/H/I/J/K/L=26-390"/>
</dbReference>
<dbReference type="PDB" id="4P8U">
    <property type="method" value="X-ray"/>
    <property type="resolution" value="2.40 A"/>
    <property type="chains" value="A=27-390"/>
</dbReference>
<dbReference type="PDB" id="4P8V">
    <property type="method" value="X-ray"/>
    <property type="resolution" value="1.64 A"/>
    <property type="chains" value="A=27-390"/>
</dbReference>
<dbReference type="PDB" id="4P8W">
    <property type="method" value="X-ray"/>
    <property type="resolution" value="1.87 A"/>
    <property type="chains" value="A=27-390"/>
</dbReference>
<dbReference type="PDB" id="4P8X">
    <property type="method" value="X-ray"/>
    <property type="resolution" value="2.48 A"/>
    <property type="chains" value="A=27-390"/>
</dbReference>
<dbReference type="PDBsum" id="4AY1"/>
<dbReference type="PDBsum" id="4P8U"/>
<dbReference type="PDBsum" id="4P8V"/>
<dbReference type="PDBsum" id="4P8W"/>
<dbReference type="PDBsum" id="4P8X"/>
<dbReference type="SMR" id="Q15782"/>
<dbReference type="BioGRID" id="107541">
    <property type="interactions" value="19"/>
</dbReference>
<dbReference type="FunCoup" id="Q15782">
    <property type="interactions" value="124"/>
</dbReference>
<dbReference type="IntAct" id="Q15782">
    <property type="interactions" value="9"/>
</dbReference>
<dbReference type="MINT" id="Q15782"/>
<dbReference type="STRING" id="9606.ENSP00000437082"/>
<dbReference type="CAZy" id="GH18">
    <property type="family name" value="Glycoside Hydrolase Family 18"/>
</dbReference>
<dbReference type="UniLectin" id="Q15782"/>
<dbReference type="GlyCosmos" id="Q15782">
    <property type="glycosylation" value="1 site, No reported glycans"/>
</dbReference>
<dbReference type="GlyGen" id="Q15782">
    <property type="glycosylation" value="1 site"/>
</dbReference>
<dbReference type="iPTMnet" id="Q15782"/>
<dbReference type="PhosphoSitePlus" id="Q15782"/>
<dbReference type="BioMuta" id="CHI3L2"/>
<dbReference type="DMDM" id="13124005"/>
<dbReference type="jPOST" id="Q15782"/>
<dbReference type="MassIVE" id="Q15782"/>
<dbReference type="PaxDb" id="9606-ENSP00000437082"/>
<dbReference type="PeptideAtlas" id="Q15782"/>
<dbReference type="ProteomicsDB" id="1646"/>
<dbReference type="ProteomicsDB" id="4806"/>
<dbReference type="ProteomicsDB" id="60758">
    <molecule id="Q15782-4"/>
</dbReference>
<dbReference type="Antibodypedia" id="1462">
    <property type="antibodies" value="241 antibodies from 29 providers"/>
</dbReference>
<dbReference type="DNASU" id="1117"/>
<dbReference type="Ensembl" id="ENST00000369744.6">
    <molecule id="Q15782-6"/>
    <property type="protein sequence ID" value="ENSP00000358759.2"/>
    <property type="gene ID" value="ENSG00000064886.14"/>
</dbReference>
<dbReference type="Ensembl" id="ENST00000369748.9">
    <molecule id="Q15782-4"/>
    <property type="protein sequence ID" value="ENSP00000358763.4"/>
    <property type="gene ID" value="ENSG00000064886.14"/>
</dbReference>
<dbReference type="Ensembl" id="ENST00000445067.6">
    <molecule id="Q15782-4"/>
    <property type="protein sequence ID" value="ENSP00000437082.1"/>
    <property type="gene ID" value="ENSG00000064886.14"/>
</dbReference>
<dbReference type="Ensembl" id="ENST00000466741.5">
    <molecule id="Q15782-5"/>
    <property type="protein sequence ID" value="ENSP00000437086.1"/>
    <property type="gene ID" value="ENSG00000064886.14"/>
</dbReference>
<dbReference type="Ensembl" id="ENST00000524472.5">
    <molecule id="Q15782-5"/>
    <property type="protein sequence ID" value="ENSP00000432049.1"/>
    <property type="gene ID" value="ENSG00000064886.14"/>
</dbReference>
<dbReference type="GeneID" id="1117"/>
<dbReference type="KEGG" id="hsa:1117"/>
<dbReference type="MANE-Select" id="ENST00000369748.9">
    <property type="protein sequence ID" value="ENSP00000358763.4"/>
    <property type="RefSeq nucleotide sequence ID" value="NM_004000.3"/>
    <property type="RefSeq protein sequence ID" value="NP_003991.2"/>
</dbReference>
<dbReference type="UCSC" id="uc001eam.4">
    <molecule id="Q15782-4"/>
    <property type="organism name" value="human"/>
</dbReference>
<dbReference type="AGR" id="HGNC:1933"/>
<dbReference type="CTD" id="1117"/>
<dbReference type="DisGeNET" id="1117"/>
<dbReference type="GeneCards" id="CHI3L2"/>
<dbReference type="HGNC" id="HGNC:1933">
    <property type="gene designation" value="CHI3L2"/>
</dbReference>
<dbReference type="HPA" id="ENSG00000064886">
    <property type="expression patterns" value="Tissue enhanced (lymphoid tissue, salivary gland)"/>
</dbReference>
<dbReference type="MIM" id="601526">
    <property type="type" value="gene"/>
</dbReference>
<dbReference type="neXtProt" id="NX_Q15782"/>
<dbReference type="OpenTargets" id="ENSG00000064886"/>
<dbReference type="PharmGKB" id="PA26464"/>
<dbReference type="VEuPathDB" id="HostDB:ENSG00000064886"/>
<dbReference type="eggNOG" id="KOG2806">
    <property type="taxonomic scope" value="Eukaryota"/>
</dbReference>
<dbReference type="GeneTree" id="ENSGT00940000163351"/>
<dbReference type="HOGENOM" id="CLU_002833_3_1_1"/>
<dbReference type="InParanoid" id="Q15782"/>
<dbReference type="OMA" id="HETTKHH"/>
<dbReference type="OrthoDB" id="76388at2759"/>
<dbReference type="PAN-GO" id="Q15782">
    <property type="GO annotations" value="3 GO annotations based on evolutionary models"/>
</dbReference>
<dbReference type="PhylomeDB" id="Q15782"/>
<dbReference type="TreeFam" id="TF315610"/>
<dbReference type="PathwayCommons" id="Q15782"/>
<dbReference type="SignaLink" id="Q15782"/>
<dbReference type="BioGRID-ORCS" id="1117">
    <property type="hits" value="13 hits in 1141 CRISPR screens"/>
</dbReference>
<dbReference type="EvolutionaryTrace" id="Q15782"/>
<dbReference type="GenomeRNAi" id="1117"/>
<dbReference type="Pharos" id="Q15782">
    <property type="development level" value="Tbio"/>
</dbReference>
<dbReference type="PRO" id="PR:Q15782"/>
<dbReference type="Proteomes" id="UP000005640">
    <property type="component" value="Chromosome 1"/>
</dbReference>
<dbReference type="RNAct" id="Q15782">
    <property type="molecule type" value="protein"/>
</dbReference>
<dbReference type="Bgee" id="ENSG00000064886">
    <property type="expression patterns" value="Expressed in cartilage tissue and 139 other cell types or tissues"/>
</dbReference>
<dbReference type="ExpressionAtlas" id="Q15782">
    <property type="expression patterns" value="baseline and differential"/>
</dbReference>
<dbReference type="GO" id="GO:0005576">
    <property type="term" value="C:extracellular region"/>
    <property type="evidence" value="ECO:0000318"/>
    <property type="project" value="GO_Central"/>
</dbReference>
<dbReference type="GO" id="GO:0005615">
    <property type="term" value="C:extracellular space"/>
    <property type="evidence" value="ECO:0007005"/>
    <property type="project" value="UniProtKB"/>
</dbReference>
<dbReference type="GO" id="GO:0030246">
    <property type="term" value="F:carbohydrate binding"/>
    <property type="evidence" value="ECO:0007669"/>
    <property type="project" value="UniProtKB-KW"/>
</dbReference>
<dbReference type="GO" id="GO:0008061">
    <property type="term" value="F:chitin binding"/>
    <property type="evidence" value="ECO:0000314"/>
    <property type="project" value="UniProtKB"/>
</dbReference>
<dbReference type="GO" id="GO:0016787">
    <property type="term" value="F:hydrolase activity"/>
    <property type="evidence" value="ECO:0007669"/>
    <property type="project" value="UniProtKB-KW"/>
</dbReference>
<dbReference type="GO" id="GO:0005975">
    <property type="term" value="P:carbohydrate metabolic process"/>
    <property type="evidence" value="ECO:0007669"/>
    <property type="project" value="InterPro"/>
</dbReference>
<dbReference type="GO" id="GO:0006032">
    <property type="term" value="P:chitin catabolic process"/>
    <property type="evidence" value="ECO:0000318"/>
    <property type="project" value="GO_Central"/>
</dbReference>
<dbReference type="CDD" id="cd02872">
    <property type="entry name" value="GH18_chitolectin_chitotriosidase"/>
    <property type="match status" value="1"/>
</dbReference>
<dbReference type="FunFam" id="3.10.50.10:FF:000001">
    <property type="entry name" value="Chitinase 3-like 1"/>
    <property type="match status" value="1"/>
</dbReference>
<dbReference type="FunFam" id="3.20.20.80:FF:000047">
    <property type="entry name" value="Chitinase-3-like protein 1"/>
    <property type="match status" value="1"/>
</dbReference>
<dbReference type="Gene3D" id="3.10.50.10">
    <property type="match status" value="1"/>
</dbReference>
<dbReference type="Gene3D" id="3.20.20.80">
    <property type="entry name" value="Glycosidases"/>
    <property type="match status" value="1"/>
</dbReference>
<dbReference type="InterPro" id="IPR011583">
    <property type="entry name" value="Chitinase_II/V-like_cat"/>
</dbReference>
<dbReference type="InterPro" id="IPR029070">
    <property type="entry name" value="Chitinase_insertion_sf"/>
</dbReference>
<dbReference type="InterPro" id="IPR001223">
    <property type="entry name" value="Glyco_hydro18_cat"/>
</dbReference>
<dbReference type="InterPro" id="IPR017853">
    <property type="entry name" value="Glycoside_hydrolase_SF"/>
</dbReference>
<dbReference type="InterPro" id="IPR050314">
    <property type="entry name" value="Glycosyl_Hydrlase_18"/>
</dbReference>
<dbReference type="PANTHER" id="PTHR11177">
    <property type="entry name" value="CHITINASE"/>
    <property type="match status" value="1"/>
</dbReference>
<dbReference type="PANTHER" id="PTHR11177:SF82">
    <property type="entry name" value="CHITINASE-3-LIKE PROTEIN 2"/>
    <property type="match status" value="1"/>
</dbReference>
<dbReference type="Pfam" id="PF00704">
    <property type="entry name" value="Glyco_hydro_18"/>
    <property type="match status" value="1"/>
</dbReference>
<dbReference type="SMART" id="SM00636">
    <property type="entry name" value="Glyco_18"/>
    <property type="match status" value="1"/>
</dbReference>
<dbReference type="SUPFAM" id="SSF51445">
    <property type="entry name" value="(Trans)glycosidases"/>
    <property type="match status" value="1"/>
</dbReference>
<dbReference type="SUPFAM" id="SSF54556">
    <property type="entry name" value="Chitinase insertion domain"/>
    <property type="match status" value="1"/>
</dbReference>
<dbReference type="PROSITE" id="PS51910">
    <property type="entry name" value="GH18_2"/>
    <property type="match status" value="1"/>
</dbReference>